<evidence type="ECO:0000255" key="1">
    <source>
        <dbReference type="HAMAP-Rule" id="MF_01605"/>
    </source>
</evidence>
<proteinExistence type="inferred from homology"/>
<name>6PGL_YERPA</name>
<sequence>MKQAVYVASPDSQQIHVWQLDSAGELTLLQTVDVPGQVQPMAISPNQRHLYVGVRPDFGIVSYHIADDGTLTAAGMAPLPGSPTHIDTDRQGRFLFSASYSFNCVSISPIDTHGVVQAPIQQLDDLPAPHSANIDPTNQILLVPCLKEDKVRLFDLSAEGQLTPHAQADITVAAGAGPRHMAFHPNHQVAYCVNELNSSVDVYQISNNGQEYHLVQSLDAMPADFTGTRWAADIHITPNGRYLYISDRTANLLGIFTVSEDGRVISLVGHHLTEAQPRGFNIDHSGNFLIASGQKSDHIEVYRIDQNTGELTTLKRYPVGKGPMWVSIRGAQNS</sequence>
<comment type="function">
    <text evidence="1">Catalyzes the hydrolysis of 6-phosphogluconolactone to 6-phosphogluconate.</text>
</comment>
<comment type="catalytic activity">
    <reaction evidence="1">
        <text>6-phospho-D-glucono-1,5-lactone + H2O = 6-phospho-D-gluconate + H(+)</text>
        <dbReference type="Rhea" id="RHEA:12556"/>
        <dbReference type="ChEBI" id="CHEBI:15377"/>
        <dbReference type="ChEBI" id="CHEBI:15378"/>
        <dbReference type="ChEBI" id="CHEBI:57955"/>
        <dbReference type="ChEBI" id="CHEBI:58759"/>
        <dbReference type="EC" id="3.1.1.31"/>
    </reaction>
</comment>
<comment type="pathway">
    <text evidence="1">Carbohydrate degradation; pentose phosphate pathway; D-ribulose 5-phosphate from D-glucose 6-phosphate (oxidative stage): step 2/3.</text>
</comment>
<comment type="similarity">
    <text evidence="1">Belongs to the cycloisomerase 2 family.</text>
</comment>
<dbReference type="EC" id="3.1.1.31" evidence="1"/>
<dbReference type="EMBL" id="CP000308">
    <property type="protein sequence ID" value="ABG13023.1"/>
    <property type="molecule type" value="Genomic_DNA"/>
</dbReference>
<dbReference type="RefSeq" id="WP_002210760.1">
    <property type="nucleotide sequence ID" value="NZ_CP009906.1"/>
</dbReference>
<dbReference type="SMR" id="Q1C949"/>
<dbReference type="GeneID" id="57977288"/>
<dbReference type="KEGG" id="ypa:YPA_1056"/>
<dbReference type="UniPathway" id="UPA00115">
    <property type="reaction ID" value="UER00409"/>
</dbReference>
<dbReference type="Proteomes" id="UP000001971">
    <property type="component" value="Chromosome"/>
</dbReference>
<dbReference type="GO" id="GO:0005829">
    <property type="term" value="C:cytosol"/>
    <property type="evidence" value="ECO:0007669"/>
    <property type="project" value="TreeGrafter"/>
</dbReference>
<dbReference type="GO" id="GO:0017057">
    <property type="term" value="F:6-phosphogluconolactonase activity"/>
    <property type="evidence" value="ECO:0007669"/>
    <property type="project" value="UniProtKB-UniRule"/>
</dbReference>
<dbReference type="GO" id="GO:0006006">
    <property type="term" value="P:glucose metabolic process"/>
    <property type="evidence" value="ECO:0007669"/>
    <property type="project" value="UniProtKB-KW"/>
</dbReference>
<dbReference type="GO" id="GO:0009051">
    <property type="term" value="P:pentose-phosphate shunt, oxidative branch"/>
    <property type="evidence" value="ECO:0007669"/>
    <property type="project" value="UniProtKB-UniRule"/>
</dbReference>
<dbReference type="FunFam" id="2.130.10.10:FF:000051">
    <property type="entry name" value="6-phosphogluconolactonase"/>
    <property type="match status" value="1"/>
</dbReference>
<dbReference type="Gene3D" id="2.130.10.10">
    <property type="entry name" value="YVTN repeat-like/Quinoprotein amine dehydrogenase"/>
    <property type="match status" value="1"/>
</dbReference>
<dbReference type="HAMAP" id="MF_01605">
    <property type="entry name" value="6P_gluconolactonase"/>
    <property type="match status" value="1"/>
</dbReference>
<dbReference type="InterPro" id="IPR022528">
    <property type="entry name" value="6-phosphogluconolactonase_YbhE"/>
</dbReference>
<dbReference type="InterPro" id="IPR050282">
    <property type="entry name" value="Cycloisomerase_2"/>
</dbReference>
<dbReference type="InterPro" id="IPR019405">
    <property type="entry name" value="Lactonase_7-beta_prop"/>
</dbReference>
<dbReference type="InterPro" id="IPR011045">
    <property type="entry name" value="N2O_reductase_N"/>
</dbReference>
<dbReference type="InterPro" id="IPR015943">
    <property type="entry name" value="WD40/YVTN_repeat-like_dom_sf"/>
</dbReference>
<dbReference type="NCBIfam" id="NF008258">
    <property type="entry name" value="PRK11028.1"/>
    <property type="match status" value="1"/>
</dbReference>
<dbReference type="PANTHER" id="PTHR30344:SF1">
    <property type="entry name" value="6-PHOSPHOGLUCONOLACTONASE"/>
    <property type="match status" value="1"/>
</dbReference>
<dbReference type="PANTHER" id="PTHR30344">
    <property type="entry name" value="6-PHOSPHOGLUCONOLACTONASE-RELATED"/>
    <property type="match status" value="1"/>
</dbReference>
<dbReference type="Pfam" id="PF10282">
    <property type="entry name" value="Lactonase"/>
    <property type="match status" value="1"/>
</dbReference>
<dbReference type="SUPFAM" id="SSF50974">
    <property type="entry name" value="Nitrous oxide reductase, N-terminal domain"/>
    <property type="match status" value="1"/>
</dbReference>
<feature type="chain" id="PRO_0000291475" description="6-phosphogluconolactonase">
    <location>
        <begin position="1"/>
        <end position="334"/>
    </location>
</feature>
<accession>Q1C949</accession>
<gene>
    <name evidence="1" type="primary">pgl</name>
    <name type="ordered locus">YPA_1056</name>
</gene>
<protein>
    <recommendedName>
        <fullName evidence="1">6-phosphogluconolactonase</fullName>
        <shortName evidence="1">6-P-gluconolactonase</shortName>
        <ecNumber evidence="1">3.1.1.31</ecNumber>
    </recommendedName>
</protein>
<organism>
    <name type="scientific">Yersinia pestis bv. Antiqua (strain Antiqua)</name>
    <dbReference type="NCBI Taxonomy" id="360102"/>
    <lineage>
        <taxon>Bacteria</taxon>
        <taxon>Pseudomonadati</taxon>
        <taxon>Pseudomonadota</taxon>
        <taxon>Gammaproteobacteria</taxon>
        <taxon>Enterobacterales</taxon>
        <taxon>Yersiniaceae</taxon>
        <taxon>Yersinia</taxon>
    </lineage>
</organism>
<reference key="1">
    <citation type="journal article" date="2006" name="J. Bacteriol.">
        <title>Complete genome sequence of Yersinia pestis strains Antiqua and Nepal516: evidence of gene reduction in an emerging pathogen.</title>
        <authorList>
            <person name="Chain P.S.G."/>
            <person name="Hu P."/>
            <person name="Malfatti S.A."/>
            <person name="Radnedge L."/>
            <person name="Larimer F."/>
            <person name="Vergez L.M."/>
            <person name="Worsham P."/>
            <person name="Chu M.C."/>
            <person name="Andersen G.L."/>
        </authorList>
    </citation>
    <scope>NUCLEOTIDE SEQUENCE [LARGE SCALE GENOMIC DNA]</scope>
    <source>
        <strain>Antiqua</strain>
    </source>
</reference>
<keyword id="KW-0119">Carbohydrate metabolism</keyword>
<keyword id="KW-0313">Glucose metabolism</keyword>
<keyword id="KW-0378">Hydrolase</keyword>